<protein>
    <recommendedName>
        <fullName>Probable flagellin PH0548</fullName>
    </recommendedName>
</protein>
<comment type="function">
    <text evidence="1">Flagellin is the subunit protein which polymerizes to form the filaments of archaeal flagella.</text>
</comment>
<comment type="subcellular location">
    <subcellularLocation>
        <location evidence="1">Archaeal flagellum</location>
    </subcellularLocation>
</comment>
<comment type="similarity">
    <text evidence="2">Belongs to the archaeal flagellin family.</text>
</comment>
<evidence type="ECO:0000250" key="1"/>
<evidence type="ECO:0000305" key="2"/>
<feature type="chain" id="PRO_0000157961" description="Probable flagellin PH0548">
    <location>
        <begin position="1"/>
        <end position="207"/>
    </location>
</feature>
<keyword id="KW-0974">Archaeal flagellum</keyword>
<organism>
    <name type="scientific">Pyrococcus horikoshii (strain ATCC 700860 / DSM 12428 / JCM 9974 / NBRC 100139 / OT-3)</name>
    <dbReference type="NCBI Taxonomy" id="70601"/>
    <lineage>
        <taxon>Archaea</taxon>
        <taxon>Methanobacteriati</taxon>
        <taxon>Methanobacteriota</taxon>
        <taxon>Thermococci</taxon>
        <taxon>Thermococcales</taxon>
        <taxon>Thermococcaceae</taxon>
        <taxon>Pyrococcus</taxon>
    </lineage>
</organism>
<accession>O58283</accession>
<gene>
    <name type="ordered locus">PH0548</name>
</gene>
<name>FLA2_PYRHO</name>
<dbReference type="EMBL" id="BA000001">
    <property type="protein sequence ID" value="BAA29637.1"/>
    <property type="molecule type" value="Genomic_DNA"/>
</dbReference>
<dbReference type="PIR" id="H71168">
    <property type="entry name" value="H71168"/>
</dbReference>
<dbReference type="RefSeq" id="WP_010884649.1">
    <property type="nucleotide sequence ID" value="NC_000961.1"/>
</dbReference>
<dbReference type="SMR" id="O58283"/>
<dbReference type="STRING" id="70601.gene:9377485"/>
<dbReference type="EnsemblBacteria" id="BAA29637">
    <property type="protein sequence ID" value="BAA29637"/>
    <property type="gene ID" value="BAA29637"/>
</dbReference>
<dbReference type="GeneID" id="1444436"/>
<dbReference type="KEGG" id="pho:PH0548"/>
<dbReference type="eggNOG" id="arCOG01829">
    <property type="taxonomic scope" value="Archaea"/>
</dbReference>
<dbReference type="OrthoDB" id="102632at2157"/>
<dbReference type="Proteomes" id="UP000000752">
    <property type="component" value="Chromosome"/>
</dbReference>
<dbReference type="GO" id="GO:0097589">
    <property type="term" value="C:archaeal-type flagellum"/>
    <property type="evidence" value="ECO:0007669"/>
    <property type="project" value="UniProtKB-SubCell"/>
</dbReference>
<dbReference type="GO" id="GO:0005198">
    <property type="term" value="F:structural molecule activity"/>
    <property type="evidence" value="ECO:0007669"/>
    <property type="project" value="InterPro"/>
</dbReference>
<dbReference type="GO" id="GO:0097588">
    <property type="term" value="P:archaeal or bacterial-type flagellum-dependent cell motility"/>
    <property type="evidence" value="ECO:0007669"/>
    <property type="project" value="InterPro"/>
</dbReference>
<dbReference type="InterPro" id="IPR013373">
    <property type="entry name" value="Flagellin/pilin_N_arc"/>
</dbReference>
<dbReference type="InterPro" id="IPR002774">
    <property type="entry name" value="Flagellin_arc"/>
</dbReference>
<dbReference type="NCBIfam" id="TIGR02537">
    <property type="entry name" value="arch_flag_Nterm"/>
    <property type="match status" value="1"/>
</dbReference>
<dbReference type="NCBIfam" id="NF006325">
    <property type="entry name" value="PRK08541.1"/>
    <property type="match status" value="1"/>
</dbReference>
<dbReference type="PANTHER" id="PTHR35903">
    <property type="entry name" value="FLAGELLIN B1"/>
    <property type="match status" value="1"/>
</dbReference>
<dbReference type="PANTHER" id="PTHR35903:SF1">
    <property type="entry name" value="FLAGELLIN B1"/>
    <property type="match status" value="1"/>
</dbReference>
<dbReference type="Pfam" id="PF01917">
    <property type="entry name" value="Arch_flagellin"/>
    <property type="match status" value="1"/>
</dbReference>
<sequence>MRRGAVGIGTLIVFIAMVLVAAVAAAVLINTSGYLQQKSQATGRQTTQEVASGIKVTSVIGHVDTTNNAIDKLAIYVSPNAGSEGIDLRYTKIVLRSKSQEVSLYYNRSNYYNGAVDNIFDISGVWPSNGYTFGIVVIQDSDNSVQQNYPTLNQGDLVALTVNANAALGGIKPGTSISGEVIPEQGAPGVIEFTTPSTYTETVVELQ</sequence>
<reference key="1">
    <citation type="journal article" date="1998" name="DNA Res.">
        <title>Complete sequence and gene organization of the genome of a hyper-thermophilic archaebacterium, Pyrococcus horikoshii OT3.</title>
        <authorList>
            <person name="Kawarabayasi Y."/>
            <person name="Sawada M."/>
            <person name="Horikawa H."/>
            <person name="Haikawa Y."/>
            <person name="Hino Y."/>
            <person name="Yamamoto S."/>
            <person name="Sekine M."/>
            <person name="Baba S."/>
            <person name="Kosugi H."/>
            <person name="Hosoyama A."/>
            <person name="Nagai Y."/>
            <person name="Sakai M."/>
            <person name="Ogura K."/>
            <person name="Otsuka R."/>
            <person name="Nakazawa H."/>
            <person name="Takamiya M."/>
            <person name="Ohfuku Y."/>
            <person name="Funahashi T."/>
            <person name="Tanaka T."/>
            <person name="Kudoh Y."/>
            <person name="Yamazaki J."/>
            <person name="Kushida N."/>
            <person name="Oguchi A."/>
            <person name="Aoki K."/>
            <person name="Yoshizawa T."/>
            <person name="Nakamura Y."/>
            <person name="Robb F.T."/>
            <person name="Horikoshi K."/>
            <person name="Masuchi Y."/>
            <person name="Shizuya H."/>
            <person name="Kikuchi H."/>
        </authorList>
    </citation>
    <scope>NUCLEOTIDE SEQUENCE [LARGE SCALE GENOMIC DNA]</scope>
    <source>
        <strain>ATCC 700860 / DSM 12428 / JCM 9974 / NBRC 100139 / OT-3</strain>
    </source>
</reference>
<proteinExistence type="inferred from homology"/>